<evidence type="ECO:0000255" key="1">
    <source>
        <dbReference type="HAMAP-Rule" id="MF_00151"/>
    </source>
</evidence>
<sequence>MRRAVCPGSFDPVTNGHLDIIGRASRLFDEVIVGVLINQSKTGLFTVDERIDMLREVVRSYDNVRVESFRGLLVDFCHAQQASVLIKGLRAVSDFDYELQMAQMNIGLAGVETLFMPTNPLYSFLSSSLVKDVAKWGGDISAHVPEVVRGALLARLDPPSRR</sequence>
<dbReference type="EC" id="2.7.7.3" evidence="1"/>
<dbReference type="EMBL" id="CP000667">
    <property type="protein sequence ID" value="ABP53752.1"/>
    <property type="molecule type" value="Genomic_DNA"/>
</dbReference>
<dbReference type="RefSeq" id="WP_011905184.1">
    <property type="nucleotide sequence ID" value="NC_009380.1"/>
</dbReference>
<dbReference type="SMR" id="A4X4F2"/>
<dbReference type="STRING" id="369723.Strop_1282"/>
<dbReference type="KEGG" id="stp:Strop_1282"/>
<dbReference type="PATRIC" id="fig|369723.5.peg.1306"/>
<dbReference type="eggNOG" id="COG0669">
    <property type="taxonomic scope" value="Bacteria"/>
</dbReference>
<dbReference type="HOGENOM" id="CLU_100149_0_1_11"/>
<dbReference type="UniPathway" id="UPA00241">
    <property type="reaction ID" value="UER00355"/>
</dbReference>
<dbReference type="Proteomes" id="UP000000235">
    <property type="component" value="Chromosome"/>
</dbReference>
<dbReference type="GO" id="GO:0005737">
    <property type="term" value="C:cytoplasm"/>
    <property type="evidence" value="ECO:0007669"/>
    <property type="project" value="UniProtKB-SubCell"/>
</dbReference>
<dbReference type="GO" id="GO:0005524">
    <property type="term" value="F:ATP binding"/>
    <property type="evidence" value="ECO:0007669"/>
    <property type="project" value="UniProtKB-KW"/>
</dbReference>
<dbReference type="GO" id="GO:0004595">
    <property type="term" value="F:pantetheine-phosphate adenylyltransferase activity"/>
    <property type="evidence" value="ECO:0007669"/>
    <property type="project" value="UniProtKB-UniRule"/>
</dbReference>
<dbReference type="GO" id="GO:0015937">
    <property type="term" value="P:coenzyme A biosynthetic process"/>
    <property type="evidence" value="ECO:0007669"/>
    <property type="project" value="UniProtKB-UniRule"/>
</dbReference>
<dbReference type="CDD" id="cd02163">
    <property type="entry name" value="PPAT"/>
    <property type="match status" value="1"/>
</dbReference>
<dbReference type="Gene3D" id="3.40.50.620">
    <property type="entry name" value="HUPs"/>
    <property type="match status" value="1"/>
</dbReference>
<dbReference type="HAMAP" id="MF_00151">
    <property type="entry name" value="PPAT_bact"/>
    <property type="match status" value="1"/>
</dbReference>
<dbReference type="InterPro" id="IPR004821">
    <property type="entry name" value="Cyt_trans-like"/>
</dbReference>
<dbReference type="InterPro" id="IPR001980">
    <property type="entry name" value="PPAT"/>
</dbReference>
<dbReference type="InterPro" id="IPR014729">
    <property type="entry name" value="Rossmann-like_a/b/a_fold"/>
</dbReference>
<dbReference type="NCBIfam" id="TIGR01510">
    <property type="entry name" value="coaD_prev_kdtB"/>
    <property type="match status" value="1"/>
</dbReference>
<dbReference type="NCBIfam" id="TIGR00125">
    <property type="entry name" value="cyt_tran_rel"/>
    <property type="match status" value="1"/>
</dbReference>
<dbReference type="PANTHER" id="PTHR21342">
    <property type="entry name" value="PHOSPHOPANTETHEINE ADENYLYLTRANSFERASE"/>
    <property type="match status" value="1"/>
</dbReference>
<dbReference type="PANTHER" id="PTHR21342:SF1">
    <property type="entry name" value="PHOSPHOPANTETHEINE ADENYLYLTRANSFERASE"/>
    <property type="match status" value="1"/>
</dbReference>
<dbReference type="Pfam" id="PF01467">
    <property type="entry name" value="CTP_transf_like"/>
    <property type="match status" value="1"/>
</dbReference>
<dbReference type="PRINTS" id="PR01020">
    <property type="entry name" value="LPSBIOSNTHSS"/>
</dbReference>
<dbReference type="SUPFAM" id="SSF52374">
    <property type="entry name" value="Nucleotidylyl transferase"/>
    <property type="match status" value="1"/>
</dbReference>
<name>COAD_SALTO</name>
<protein>
    <recommendedName>
        <fullName evidence="1">Phosphopantetheine adenylyltransferase</fullName>
        <ecNumber evidence="1">2.7.7.3</ecNumber>
    </recommendedName>
    <alternativeName>
        <fullName evidence="1">Dephospho-CoA pyrophosphorylase</fullName>
    </alternativeName>
    <alternativeName>
        <fullName evidence="1">Pantetheine-phosphate adenylyltransferase</fullName>
        <shortName evidence="1">PPAT</shortName>
    </alternativeName>
</protein>
<accession>A4X4F2</accession>
<gene>
    <name evidence="1" type="primary">coaD</name>
    <name type="ordered locus">Strop_1282</name>
</gene>
<keyword id="KW-0067">ATP-binding</keyword>
<keyword id="KW-0173">Coenzyme A biosynthesis</keyword>
<keyword id="KW-0963">Cytoplasm</keyword>
<keyword id="KW-0460">Magnesium</keyword>
<keyword id="KW-0547">Nucleotide-binding</keyword>
<keyword id="KW-0548">Nucleotidyltransferase</keyword>
<keyword id="KW-1185">Reference proteome</keyword>
<keyword id="KW-0808">Transferase</keyword>
<comment type="function">
    <text evidence="1">Reversibly transfers an adenylyl group from ATP to 4'-phosphopantetheine, yielding dephospho-CoA (dPCoA) and pyrophosphate.</text>
</comment>
<comment type="catalytic activity">
    <reaction evidence="1">
        <text>(R)-4'-phosphopantetheine + ATP + H(+) = 3'-dephospho-CoA + diphosphate</text>
        <dbReference type="Rhea" id="RHEA:19801"/>
        <dbReference type="ChEBI" id="CHEBI:15378"/>
        <dbReference type="ChEBI" id="CHEBI:30616"/>
        <dbReference type="ChEBI" id="CHEBI:33019"/>
        <dbReference type="ChEBI" id="CHEBI:57328"/>
        <dbReference type="ChEBI" id="CHEBI:61723"/>
        <dbReference type="EC" id="2.7.7.3"/>
    </reaction>
</comment>
<comment type="cofactor">
    <cofactor evidence="1">
        <name>Mg(2+)</name>
        <dbReference type="ChEBI" id="CHEBI:18420"/>
    </cofactor>
</comment>
<comment type="pathway">
    <text evidence="1">Cofactor biosynthesis; coenzyme A biosynthesis; CoA from (R)-pantothenate: step 4/5.</text>
</comment>
<comment type="subunit">
    <text evidence="1">Homohexamer.</text>
</comment>
<comment type="subcellular location">
    <subcellularLocation>
        <location evidence="1">Cytoplasm</location>
    </subcellularLocation>
</comment>
<comment type="similarity">
    <text evidence="1">Belongs to the bacterial CoaD family.</text>
</comment>
<proteinExistence type="inferred from homology"/>
<reference key="1">
    <citation type="journal article" date="2007" name="Proc. Natl. Acad. Sci. U.S.A.">
        <title>Genome sequencing reveals complex secondary metabolome in the marine actinomycete Salinispora tropica.</title>
        <authorList>
            <person name="Udwary D.W."/>
            <person name="Zeigler L."/>
            <person name="Asolkar R.N."/>
            <person name="Singan V."/>
            <person name="Lapidus A."/>
            <person name="Fenical W."/>
            <person name="Jensen P.R."/>
            <person name="Moore B.S."/>
        </authorList>
    </citation>
    <scope>NUCLEOTIDE SEQUENCE [LARGE SCALE GENOMIC DNA]</scope>
    <source>
        <strain>ATCC BAA-916 / DSM 44818 / JCM 13857 / NBRC 105044 / CNB-440</strain>
    </source>
</reference>
<feature type="chain" id="PRO_1000076785" description="Phosphopantetheine adenylyltransferase">
    <location>
        <begin position="1"/>
        <end position="162"/>
    </location>
</feature>
<feature type="binding site" evidence="1">
    <location>
        <begin position="9"/>
        <end position="10"/>
    </location>
    <ligand>
        <name>ATP</name>
        <dbReference type="ChEBI" id="CHEBI:30616"/>
    </ligand>
</feature>
<feature type="binding site" evidence="1">
    <location>
        <position position="9"/>
    </location>
    <ligand>
        <name>substrate</name>
    </ligand>
</feature>
<feature type="binding site" evidence="1">
    <location>
        <position position="17"/>
    </location>
    <ligand>
        <name>ATP</name>
        <dbReference type="ChEBI" id="CHEBI:30616"/>
    </ligand>
</feature>
<feature type="binding site" evidence="1">
    <location>
        <position position="41"/>
    </location>
    <ligand>
        <name>substrate</name>
    </ligand>
</feature>
<feature type="binding site" evidence="1">
    <location>
        <position position="73"/>
    </location>
    <ligand>
        <name>substrate</name>
    </ligand>
</feature>
<feature type="binding site" evidence="1">
    <location>
        <position position="87"/>
    </location>
    <ligand>
        <name>substrate</name>
    </ligand>
</feature>
<feature type="binding site" evidence="1">
    <location>
        <begin position="88"/>
        <end position="90"/>
    </location>
    <ligand>
        <name>ATP</name>
        <dbReference type="ChEBI" id="CHEBI:30616"/>
    </ligand>
</feature>
<feature type="binding site" evidence="1">
    <location>
        <position position="98"/>
    </location>
    <ligand>
        <name>ATP</name>
        <dbReference type="ChEBI" id="CHEBI:30616"/>
    </ligand>
</feature>
<feature type="binding site" evidence="1">
    <location>
        <begin position="122"/>
        <end position="128"/>
    </location>
    <ligand>
        <name>ATP</name>
        <dbReference type="ChEBI" id="CHEBI:30616"/>
    </ligand>
</feature>
<feature type="site" description="Transition state stabilizer" evidence="1">
    <location>
        <position position="17"/>
    </location>
</feature>
<organism>
    <name type="scientific">Salinispora tropica (strain ATCC BAA-916 / DSM 44818 / JCM 13857 / NBRC 105044 / CNB-440)</name>
    <dbReference type="NCBI Taxonomy" id="369723"/>
    <lineage>
        <taxon>Bacteria</taxon>
        <taxon>Bacillati</taxon>
        <taxon>Actinomycetota</taxon>
        <taxon>Actinomycetes</taxon>
        <taxon>Micromonosporales</taxon>
        <taxon>Micromonosporaceae</taxon>
        <taxon>Salinispora</taxon>
    </lineage>
</organism>